<sequence>MEVKIFKLSDKYMSFEIDGITPSQANALRRTLINDIPKLAIENVTFHHGEIRDAEGNVYDSSLPLFDEMVAHRLGLIPLKTDLSLNFRDQCSCGGKGCSLCTVTYSINKIGPASVMSGDIQAISHPDLVPVDPDIPIVKLGAKQAILITAEAILGTAKEHAKWQVTSGVAYKYHREFEVNKKLFEDWAKIKERCPKSVLSEDENTIVFTDDYGCNDLSILFESDGVQIKEDDSRFIFHFETDGSLTAEETLSYALNRLMDRWGILVESLSE</sequence>
<reference key="1">
    <citation type="journal article" date="2000" name="Proc. Natl. Acad. Sci. U.S.A.">
        <title>Archaeal adaptation to higher temperatures revealed by genomic sequence of Thermoplasma volcanium.</title>
        <authorList>
            <person name="Kawashima T."/>
            <person name="Amano N."/>
            <person name="Koike H."/>
            <person name="Makino S."/>
            <person name="Higuchi S."/>
            <person name="Kawashima-Ohya Y."/>
            <person name="Watanabe K."/>
            <person name="Yamazaki M."/>
            <person name="Kanehori K."/>
            <person name="Kawamoto T."/>
            <person name="Nunoshiba T."/>
            <person name="Yamamoto Y."/>
            <person name="Aramaki H."/>
            <person name="Makino K."/>
            <person name="Suzuki M."/>
        </authorList>
    </citation>
    <scope>NUCLEOTIDE SEQUENCE [LARGE SCALE GENOMIC DNA]</scope>
    <source>
        <strain>ATCC 51530 / DSM 4299 / JCM 9571 / NBRC 15438 / GSS1</strain>
    </source>
</reference>
<organism>
    <name type="scientific">Thermoplasma volcanium (strain ATCC 51530 / DSM 4299 / JCM 9571 / NBRC 15438 / GSS1)</name>
    <dbReference type="NCBI Taxonomy" id="273116"/>
    <lineage>
        <taxon>Archaea</taxon>
        <taxon>Methanobacteriati</taxon>
        <taxon>Thermoplasmatota</taxon>
        <taxon>Thermoplasmata</taxon>
        <taxon>Thermoplasmatales</taxon>
        <taxon>Thermoplasmataceae</taxon>
        <taxon>Thermoplasma</taxon>
    </lineage>
</organism>
<gene>
    <name evidence="1" type="primary">rpo3</name>
    <name evidence="1" type="synonym">rpoD</name>
    <name type="ordered locus">TV0564</name>
    <name type="ORF">TVG0551901</name>
</gene>
<feature type="chain" id="PRO_0000132768" description="DNA-directed RNA polymerase subunit Rpo3">
    <location>
        <begin position="1"/>
        <end position="271"/>
    </location>
</feature>
<proteinExistence type="inferred from homology"/>
<name>RPO3_THEVO</name>
<comment type="function">
    <text evidence="1">DNA-dependent RNA polymerase (RNAP) catalyzes the transcription of DNA into RNA using the four ribonucleoside triphosphates as substrates.</text>
</comment>
<comment type="catalytic activity">
    <reaction evidence="1">
        <text>RNA(n) + a ribonucleoside 5'-triphosphate = RNA(n+1) + diphosphate</text>
        <dbReference type="Rhea" id="RHEA:21248"/>
        <dbReference type="Rhea" id="RHEA-COMP:14527"/>
        <dbReference type="Rhea" id="RHEA-COMP:17342"/>
        <dbReference type="ChEBI" id="CHEBI:33019"/>
        <dbReference type="ChEBI" id="CHEBI:61557"/>
        <dbReference type="ChEBI" id="CHEBI:140395"/>
        <dbReference type="EC" id="2.7.7.6"/>
    </reaction>
</comment>
<comment type="subunit">
    <text evidence="1">Part of the RNA polymerase complex.</text>
</comment>
<comment type="subcellular location">
    <subcellularLocation>
        <location evidence="1">Cytoplasm</location>
    </subcellularLocation>
</comment>
<comment type="similarity">
    <text evidence="1">Belongs to the archaeal Rpo3/eukaryotic RPB3 RNA polymerase subunit family.</text>
</comment>
<dbReference type="EC" id="2.7.7.6" evidence="1"/>
<dbReference type="EMBL" id="BA000011">
    <property type="protein sequence ID" value="BAB59706.1"/>
    <property type="molecule type" value="Genomic_DNA"/>
</dbReference>
<dbReference type="RefSeq" id="WP_010916823.1">
    <property type="nucleotide sequence ID" value="NC_002689.2"/>
</dbReference>
<dbReference type="SMR" id="Q97B93"/>
<dbReference type="STRING" id="273116.gene:9381349"/>
<dbReference type="PaxDb" id="273116-14324779"/>
<dbReference type="GeneID" id="1441081"/>
<dbReference type="KEGG" id="tvo:TVG0551901"/>
<dbReference type="eggNOG" id="arCOG04241">
    <property type="taxonomic scope" value="Archaea"/>
</dbReference>
<dbReference type="HOGENOM" id="CLU_038421_3_1_2"/>
<dbReference type="OrthoDB" id="84933at2157"/>
<dbReference type="PhylomeDB" id="Q97B93"/>
<dbReference type="Proteomes" id="UP000001017">
    <property type="component" value="Chromosome"/>
</dbReference>
<dbReference type="GO" id="GO:0005737">
    <property type="term" value="C:cytoplasm"/>
    <property type="evidence" value="ECO:0007669"/>
    <property type="project" value="UniProtKB-SubCell"/>
</dbReference>
<dbReference type="GO" id="GO:0000428">
    <property type="term" value="C:DNA-directed RNA polymerase complex"/>
    <property type="evidence" value="ECO:0007669"/>
    <property type="project" value="UniProtKB-KW"/>
</dbReference>
<dbReference type="GO" id="GO:0003677">
    <property type="term" value="F:DNA binding"/>
    <property type="evidence" value="ECO:0007669"/>
    <property type="project" value="UniProtKB-UniRule"/>
</dbReference>
<dbReference type="GO" id="GO:0003899">
    <property type="term" value="F:DNA-directed RNA polymerase activity"/>
    <property type="evidence" value="ECO:0007669"/>
    <property type="project" value="UniProtKB-UniRule"/>
</dbReference>
<dbReference type="GO" id="GO:0046983">
    <property type="term" value="F:protein dimerization activity"/>
    <property type="evidence" value="ECO:0007669"/>
    <property type="project" value="InterPro"/>
</dbReference>
<dbReference type="GO" id="GO:0006351">
    <property type="term" value="P:DNA-templated transcription"/>
    <property type="evidence" value="ECO:0007669"/>
    <property type="project" value="UniProtKB-UniRule"/>
</dbReference>
<dbReference type="CDD" id="cd07030">
    <property type="entry name" value="RNAP_D"/>
    <property type="match status" value="1"/>
</dbReference>
<dbReference type="Gene3D" id="3.30.70.3110">
    <property type="match status" value="1"/>
</dbReference>
<dbReference type="Gene3D" id="2.170.120.12">
    <property type="entry name" value="DNA-directed RNA polymerase, insert domain"/>
    <property type="match status" value="1"/>
</dbReference>
<dbReference type="Gene3D" id="3.30.1360.10">
    <property type="entry name" value="RNA polymerase, RBP11-like subunit"/>
    <property type="match status" value="1"/>
</dbReference>
<dbReference type="HAMAP" id="MF_00320">
    <property type="entry name" value="RNApol_arch_Rpo3"/>
    <property type="match status" value="1"/>
</dbReference>
<dbReference type="InterPro" id="IPR011262">
    <property type="entry name" value="DNA-dir_RNA_pol_insert"/>
</dbReference>
<dbReference type="InterPro" id="IPR011263">
    <property type="entry name" value="DNA-dir_RNA_pol_RpoA/D/Rpb3"/>
</dbReference>
<dbReference type="InterPro" id="IPR036603">
    <property type="entry name" value="RBP11-like"/>
</dbReference>
<dbReference type="InterPro" id="IPR022842">
    <property type="entry name" value="RNAP_Rpo3/Rpb3/RPAC1"/>
</dbReference>
<dbReference type="InterPro" id="IPR036643">
    <property type="entry name" value="RNApol_insert_sf"/>
</dbReference>
<dbReference type="InterPro" id="IPR050518">
    <property type="entry name" value="Rpo3/RPB3_RNA_Pol_subunit"/>
</dbReference>
<dbReference type="NCBIfam" id="NF001988">
    <property type="entry name" value="PRK00783.1"/>
    <property type="match status" value="1"/>
</dbReference>
<dbReference type="PANTHER" id="PTHR11800">
    <property type="entry name" value="DNA-DIRECTED RNA POLYMERASE"/>
    <property type="match status" value="1"/>
</dbReference>
<dbReference type="PANTHER" id="PTHR11800:SF2">
    <property type="entry name" value="DNA-DIRECTED RNA POLYMERASE II SUBUNIT RPB3"/>
    <property type="match status" value="1"/>
</dbReference>
<dbReference type="Pfam" id="PF01000">
    <property type="entry name" value="RNA_pol_A_bac"/>
    <property type="match status" value="1"/>
</dbReference>
<dbReference type="Pfam" id="PF01193">
    <property type="entry name" value="RNA_pol_L"/>
    <property type="match status" value="1"/>
</dbReference>
<dbReference type="SMART" id="SM00662">
    <property type="entry name" value="RPOLD"/>
    <property type="match status" value="1"/>
</dbReference>
<dbReference type="SUPFAM" id="SSF56553">
    <property type="entry name" value="Insert subdomain of RNA polymerase alpha subunit"/>
    <property type="match status" value="1"/>
</dbReference>
<dbReference type="SUPFAM" id="SSF55257">
    <property type="entry name" value="RBP11-like subunits of RNA polymerase"/>
    <property type="match status" value="1"/>
</dbReference>
<protein>
    <recommendedName>
        <fullName evidence="1">DNA-directed RNA polymerase subunit Rpo3</fullName>
        <ecNumber evidence="1">2.7.7.6</ecNumber>
    </recommendedName>
    <alternativeName>
        <fullName evidence="1">DNA-directed RNA polymerase subunit D</fullName>
    </alternativeName>
</protein>
<evidence type="ECO:0000255" key="1">
    <source>
        <dbReference type="HAMAP-Rule" id="MF_00320"/>
    </source>
</evidence>
<accession>Q97B93</accession>
<keyword id="KW-0963">Cytoplasm</keyword>
<keyword id="KW-0240">DNA-directed RNA polymerase</keyword>
<keyword id="KW-0548">Nucleotidyltransferase</keyword>
<keyword id="KW-0804">Transcription</keyword>
<keyword id="KW-0808">Transferase</keyword>